<protein>
    <recommendedName>
        <fullName>Proline-rich nuclear receptor coactivator 1</fullName>
    </recommendedName>
    <alternativeName>
        <fullName>Proline-rich protein 2</fullName>
    </alternativeName>
    <alternativeName>
        <fullName>Protein B4-2</fullName>
    </alternativeName>
</protein>
<accession>Q12796</accession>
<accession>B2R6Q0</accession>
<accession>E1P515</accession>
<accession>Q5T7J6</accession>
<accession>Q7Z5N0</accession>
<dbReference type="EMBL" id="U03105">
    <property type="protein sequence ID" value="AAA85576.1"/>
    <property type="molecule type" value="mRNA"/>
</dbReference>
<dbReference type="EMBL" id="AY303779">
    <property type="protein sequence ID" value="AAP76184.1"/>
    <property type="molecule type" value="mRNA"/>
</dbReference>
<dbReference type="EMBL" id="AK312665">
    <property type="protein sequence ID" value="BAG35547.1"/>
    <property type="molecule type" value="mRNA"/>
</dbReference>
<dbReference type="EMBL" id="AL353135">
    <property type="status" value="NOT_ANNOTATED_CDS"/>
    <property type="molecule type" value="Genomic_DNA"/>
</dbReference>
<dbReference type="EMBL" id="CH471051">
    <property type="protein sequence ID" value="EAW48563.1"/>
    <property type="molecule type" value="Genomic_DNA"/>
</dbReference>
<dbReference type="EMBL" id="CH471051">
    <property type="protein sequence ID" value="EAW48564.1"/>
    <property type="molecule type" value="Genomic_DNA"/>
</dbReference>
<dbReference type="EMBL" id="BC018112">
    <property type="protein sequence ID" value="AAH18112.1"/>
    <property type="molecule type" value="mRNA"/>
</dbReference>
<dbReference type="CCDS" id="CCDS5018.1">
    <molecule id="Q12796-1"/>
</dbReference>
<dbReference type="PIR" id="S59960">
    <property type="entry name" value="S59960"/>
</dbReference>
<dbReference type="RefSeq" id="NP_006804.1">
    <molecule id="Q12796-1"/>
    <property type="nucleotide sequence ID" value="NM_006813.3"/>
</dbReference>
<dbReference type="SMR" id="Q12796"/>
<dbReference type="BioGRID" id="116157">
    <property type="interactions" value="21"/>
</dbReference>
<dbReference type="CORUM" id="Q12796"/>
<dbReference type="FunCoup" id="Q12796">
    <property type="interactions" value="821"/>
</dbReference>
<dbReference type="IntAct" id="Q12796">
    <property type="interactions" value="13"/>
</dbReference>
<dbReference type="MINT" id="Q12796"/>
<dbReference type="STRING" id="9606.ENSP00000336931"/>
<dbReference type="GlyGen" id="Q12796">
    <property type="glycosylation" value="1 site, 1 O-linked glycan (1 site)"/>
</dbReference>
<dbReference type="iPTMnet" id="Q12796"/>
<dbReference type="PhosphoSitePlus" id="Q12796"/>
<dbReference type="BioMuta" id="PNRC1"/>
<dbReference type="DMDM" id="21362754"/>
<dbReference type="jPOST" id="Q12796"/>
<dbReference type="MassIVE" id="Q12796"/>
<dbReference type="PaxDb" id="9606-ENSP00000336931"/>
<dbReference type="PeptideAtlas" id="Q12796"/>
<dbReference type="ProteomicsDB" id="58943">
    <molecule id="Q12796-1"/>
</dbReference>
<dbReference type="Antibodypedia" id="31849">
    <property type="antibodies" value="44 antibodies from 18 providers"/>
</dbReference>
<dbReference type="DNASU" id="10957"/>
<dbReference type="Ensembl" id="ENST00000336032.4">
    <molecule id="Q12796-1"/>
    <property type="protein sequence ID" value="ENSP00000336931.3"/>
    <property type="gene ID" value="ENSG00000146278.11"/>
</dbReference>
<dbReference type="GeneID" id="10957"/>
<dbReference type="KEGG" id="hsa:10957"/>
<dbReference type="MANE-Select" id="ENST00000336032.4">
    <property type="protein sequence ID" value="ENSP00000336931.3"/>
    <property type="RefSeq nucleotide sequence ID" value="NM_006813.3"/>
    <property type="RefSeq protein sequence ID" value="NP_006804.1"/>
</dbReference>
<dbReference type="UCSC" id="uc003pmv.4">
    <molecule id="Q12796-1"/>
    <property type="organism name" value="human"/>
</dbReference>
<dbReference type="AGR" id="HGNC:17278"/>
<dbReference type="CTD" id="10957"/>
<dbReference type="DisGeNET" id="10957"/>
<dbReference type="GeneCards" id="PNRC1"/>
<dbReference type="HGNC" id="HGNC:17278">
    <property type="gene designation" value="PNRC1"/>
</dbReference>
<dbReference type="HPA" id="ENSG00000146278">
    <property type="expression patterns" value="Low tissue specificity"/>
</dbReference>
<dbReference type="MIM" id="606714">
    <property type="type" value="gene"/>
</dbReference>
<dbReference type="neXtProt" id="NX_Q12796"/>
<dbReference type="OpenTargets" id="ENSG00000146278"/>
<dbReference type="PharmGKB" id="PA33804"/>
<dbReference type="VEuPathDB" id="HostDB:ENSG00000146278"/>
<dbReference type="eggNOG" id="ENOG502RYBG">
    <property type="taxonomic scope" value="Eukaryota"/>
</dbReference>
<dbReference type="GeneTree" id="ENSGT00530000063881"/>
<dbReference type="HOGENOM" id="CLU_086541_0_0_1"/>
<dbReference type="InParanoid" id="Q12796"/>
<dbReference type="OMA" id="SRYQQFQ"/>
<dbReference type="OrthoDB" id="8959733at2759"/>
<dbReference type="PAN-GO" id="Q12796">
    <property type="GO annotations" value="1 GO annotation based on evolutionary models"/>
</dbReference>
<dbReference type="PhylomeDB" id="Q12796"/>
<dbReference type="TreeFam" id="TF333211"/>
<dbReference type="PathwayCommons" id="Q12796"/>
<dbReference type="SignaLink" id="Q12796"/>
<dbReference type="BioGRID-ORCS" id="10957">
    <property type="hits" value="16 hits in 1170 CRISPR screens"/>
</dbReference>
<dbReference type="CD-CODE" id="232F8A39">
    <property type="entry name" value="P-body"/>
</dbReference>
<dbReference type="ChiTaRS" id="PNRC1">
    <property type="organism name" value="human"/>
</dbReference>
<dbReference type="GeneWiki" id="PNRC1"/>
<dbReference type="GenomeRNAi" id="10957"/>
<dbReference type="Pharos" id="Q12796">
    <property type="development level" value="Tbio"/>
</dbReference>
<dbReference type="PRO" id="PR:Q12796"/>
<dbReference type="Proteomes" id="UP000005640">
    <property type="component" value="Chromosome 6"/>
</dbReference>
<dbReference type="RNAct" id="Q12796">
    <property type="molecule type" value="protein"/>
</dbReference>
<dbReference type="Bgee" id="ENSG00000146278">
    <property type="expression patterns" value="Expressed in calcaneal tendon and 203 other cell types or tissues"/>
</dbReference>
<dbReference type="ExpressionAtlas" id="Q12796">
    <property type="expression patterns" value="baseline and differential"/>
</dbReference>
<dbReference type="GO" id="GO:0005634">
    <property type="term" value="C:nucleus"/>
    <property type="evidence" value="ECO:0000318"/>
    <property type="project" value="GO_Central"/>
</dbReference>
<dbReference type="GO" id="GO:0000932">
    <property type="term" value="C:P-body"/>
    <property type="evidence" value="ECO:0000318"/>
    <property type="project" value="GO_Central"/>
</dbReference>
<dbReference type="GO" id="GO:0000184">
    <property type="term" value="P:nuclear-transcribed mRNA catabolic process, nonsense-mediated decay"/>
    <property type="evidence" value="ECO:0000318"/>
    <property type="project" value="GO_Central"/>
</dbReference>
<dbReference type="InterPro" id="IPR028322">
    <property type="entry name" value="PNRC-like_rgn"/>
</dbReference>
<dbReference type="InterPro" id="IPR026780">
    <property type="entry name" value="PNRC1/2"/>
</dbReference>
<dbReference type="PANTHER" id="PTHR15405">
    <property type="entry name" value="PROLINE-RICH NUCLEAR RECEPTOR COACTIVATOR"/>
    <property type="match status" value="1"/>
</dbReference>
<dbReference type="Pfam" id="PF15365">
    <property type="entry name" value="PNRC"/>
    <property type="match status" value="1"/>
</dbReference>
<organism>
    <name type="scientific">Homo sapiens</name>
    <name type="common">Human</name>
    <dbReference type="NCBI Taxonomy" id="9606"/>
    <lineage>
        <taxon>Eukaryota</taxon>
        <taxon>Metazoa</taxon>
        <taxon>Chordata</taxon>
        <taxon>Craniata</taxon>
        <taxon>Vertebrata</taxon>
        <taxon>Euteleostomi</taxon>
        <taxon>Mammalia</taxon>
        <taxon>Eutheria</taxon>
        <taxon>Euarchontoglires</taxon>
        <taxon>Primates</taxon>
        <taxon>Haplorrhini</taxon>
        <taxon>Catarrhini</taxon>
        <taxon>Hominidae</taxon>
        <taxon>Homo</taxon>
    </lineage>
</organism>
<keyword id="KW-0010">Activator</keyword>
<keyword id="KW-0025">Alternative splicing</keyword>
<keyword id="KW-0539">Nucleus</keyword>
<keyword id="KW-1267">Proteomics identification</keyword>
<keyword id="KW-1185">Reference proteome</keyword>
<keyword id="KW-0804">Transcription</keyword>
<keyword id="KW-0805">Transcription regulation</keyword>
<evidence type="ECO:0000256" key="1">
    <source>
        <dbReference type="SAM" id="MobiDB-lite"/>
    </source>
</evidence>
<evidence type="ECO:0000269" key="2">
    <source>
    </source>
</evidence>
<evidence type="ECO:0000269" key="3">
    <source>
    </source>
</evidence>
<evidence type="ECO:0000303" key="4">
    <source ref="2"/>
</evidence>
<evidence type="ECO:0000305" key="5"/>
<gene>
    <name type="primary">PNRC1</name>
    <name type="synonym">PROL2</name>
</gene>
<name>PNRC1_HUMAN</name>
<sequence length="327" mass="35225">MTVVSVPQREPLVLGGRLAPLGFSSRGYFGALPMVTTAPPPLPRIPDPRALPPTLFLPHFLGGDGPCLTPQPRAPAALPNRSLAVAGGTPRAAPKKRRKKKVRASPAGQLPSRFHQYQQHRPSLEGGRSPATGPSGAQEVPGPAAALAPSPAAAAGTEGASPDLAPLRPAAPGQTPLRKEVLKSKMGKSEKIALPHGQLVHGIHLYEQPKINRQKSKYNLPLTKITSAKRNENNFWQDSVSSDRIQKQEKKPFKNTENIKNSHLKKSAFLTEVSQKENYAGAKFSDPPSPSVLPKPPSHWMGSTVENSNQNRELMAVHLKTLLKVQT</sequence>
<feature type="chain" id="PRO_0000058482" description="Proline-rich nuclear receptor coactivator 1">
    <location>
        <begin position="1"/>
        <end position="327"/>
    </location>
</feature>
<feature type="region of interest" description="Disordered" evidence="1">
    <location>
        <begin position="66"/>
        <end position="175"/>
    </location>
</feature>
<feature type="region of interest" description="Disordered" evidence="1">
    <location>
        <begin position="280"/>
        <end position="300"/>
    </location>
</feature>
<feature type="short sequence motif" description="Nuclear localization signal" evidence="2">
    <location>
        <begin position="94"/>
        <end position="101"/>
    </location>
</feature>
<feature type="short sequence motif" description="SH3-binding">
    <location>
        <begin position="285"/>
        <end position="291"/>
    </location>
</feature>
<feature type="compositionally biased region" description="Basic residues" evidence="1">
    <location>
        <begin position="93"/>
        <end position="103"/>
    </location>
</feature>
<feature type="compositionally biased region" description="Low complexity" evidence="1">
    <location>
        <begin position="141"/>
        <end position="162"/>
    </location>
</feature>
<feature type="compositionally biased region" description="Pro residues" evidence="1">
    <location>
        <begin position="287"/>
        <end position="297"/>
    </location>
</feature>
<feature type="splice variant" id="VSP_055501" description="In isoform 2." evidence="4">
    <location>
        <begin position="102"/>
        <end position="180"/>
    </location>
</feature>
<feature type="sequence variant" id="VAR_051284" description="In dbSNP:rs2231277.">
    <original>P</original>
    <variation>L</variation>
    <location>
        <position position="252"/>
    </location>
</feature>
<feature type="mutagenesis site" description="Abolishes the interaction with the nuclear receptors; when associated with A-290." evidence="2">
    <original>P</original>
    <variation>A</variation>
    <location>
        <position position="287"/>
    </location>
</feature>
<feature type="mutagenesis site" description="Abolishes the interaction with the nuclear receptors; when associated with A-287." evidence="2">
    <original>P</original>
    <variation>A</variation>
    <location>
        <position position="290"/>
    </location>
</feature>
<feature type="sequence conflict" description="In Ref. 2; AAP76184." evidence="5" ref="2">
    <original>Y</original>
    <variation>N</variation>
    <location>
        <position position="218"/>
    </location>
</feature>
<reference key="1">
    <citation type="journal article" date="1995" name="Biochim. Biophys. Acta">
        <title>Cloning a cDNA from human NK/T cells which codes for a protein with high proline content.</title>
        <authorList>
            <person name="Chen J."/>
            <person name="Liu L."/>
            <person name="Pohajdak B."/>
        </authorList>
    </citation>
    <scope>NUCLEOTIDE SEQUENCE [MRNA] (ISOFORM 1)</scope>
</reference>
<reference key="2">
    <citation type="submission" date="2003-05" db="EMBL/GenBank/DDBJ databases">
        <authorList>
            <person name="Zhou G."/>
            <person name="Ke R."/>
            <person name="Li H."/>
            <person name="Cao L."/>
            <person name="Shen C."/>
            <person name="Zheng G."/>
            <person name="Yu R."/>
            <person name="Zhong G."/>
            <person name="Huang F."/>
            <person name="Lin L."/>
            <person name="Yang S."/>
        </authorList>
    </citation>
    <scope>NUCLEOTIDE SEQUENCE [MRNA] (ISOFORM 2)</scope>
</reference>
<reference key="3">
    <citation type="journal article" date="2004" name="Nat. Genet.">
        <title>Complete sequencing and characterization of 21,243 full-length human cDNAs.</title>
        <authorList>
            <person name="Ota T."/>
            <person name="Suzuki Y."/>
            <person name="Nishikawa T."/>
            <person name="Otsuki T."/>
            <person name="Sugiyama T."/>
            <person name="Irie R."/>
            <person name="Wakamatsu A."/>
            <person name="Hayashi K."/>
            <person name="Sato H."/>
            <person name="Nagai K."/>
            <person name="Kimura K."/>
            <person name="Makita H."/>
            <person name="Sekine M."/>
            <person name="Obayashi M."/>
            <person name="Nishi T."/>
            <person name="Shibahara T."/>
            <person name="Tanaka T."/>
            <person name="Ishii S."/>
            <person name="Yamamoto J."/>
            <person name="Saito K."/>
            <person name="Kawai Y."/>
            <person name="Isono Y."/>
            <person name="Nakamura Y."/>
            <person name="Nagahari K."/>
            <person name="Murakami K."/>
            <person name="Yasuda T."/>
            <person name="Iwayanagi T."/>
            <person name="Wagatsuma M."/>
            <person name="Shiratori A."/>
            <person name="Sudo H."/>
            <person name="Hosoiri T."/>
            <person name="Kaku Y."/>
            <person name="Kodaira H."/>
            <person name="Kondo H."/>
            <person name="Sugawara M."/>
            <person name="Takahashi M."/>
            <person name="Kanda K."/>
            <person name="Yokoi T."/>
            <person name="Furuya T."/>
            <person name="Kikkawa E."/>
            <person name="Omura Y."/>
            <person name="Abe K."/>
            <person name="Kamihara K."/>
            <person name="Katsuta N."/>
            <person name="Sato K."/>
            <person name="Tanikawa M."/>
            <person name="Yamazaki M."/>
            <person name="Ninomiya K."/>
            <person name="Ishibashi T."/>
            <person name="Yamashita H."/>
            <person name="Murakawa K."/>
            <person name="Fujimori K."/>
            <person name="Tanai H."/>
            <person name="Kimata M."/>
            <person name="Watanabe M."/>
            <person name="Hiraoka S."/>
            <person name="Chiba Y."/>
            <person name="Ishida S."/>
            <person name="Ono Y."/>
            <person name="Takiguchi S."/>
            <person name="Watanabe S."/>
            <person name="Yosida M."/>
            <person name="Hotuta T."/>
            <person name="Kusano J."/>
            <person name="Kanehori K."/>
            <person name="Takahashi-Fujii A."/>
            <person name="Hara H."/>
            <person name="Tanase T.-O."/>
            <person name="Nomura Y."/>
            <person name="Togiya S."/>
            <person name="Komai F."/>
            <person name="Hara R."/>
            <person name="Takeuchi K."/>
            <person name="Arita M."/>
            <person name="Imose N."/>
            <person name="Musashino K."/>
            <person name="Yuuki H."/>
            <person name="Oshima A."/>
            <person name="Sasaki N."/>
            <person name="Aotsuka S."/>
            <person name="Yoshikawa Y."/>
            <person name="Matsunawa H."/>
            <person name="Ichihara T."/>
            <person name="Shiohata N."/>
            <person name="Sano S."/>
            <person name="Moriya S."/>
            <person name="Momiyama H."/>
            <person name="Satoh N."/>
            <person name="Takami S."/>
            <person name="Terashima Y."/>
            <person name="Suzuki O."/>
            <person name="Nakagawa S."/>
            <person name="Senoh A."/>
            <person name="Mizoguchi H."/>
            <person name="Goto Y."/>
            <person name="Shimizu F."/>
            <person name="Wakebe H."/>
            <person name="Hishigaki H."/>
            <person name="Watanabe T."/>
            <person name="Sugiyama A."/>
            <person name="Takemoto M."/>
            <person name="Kawakami B."/>
            <person name="Yamazaki M."/>
            <person name="Watanabe K."/>
            <person name="Kumagai A."/>
            <person name="Itakura S."/>
            <person name="Fukuzumi Y."/>
            <person name="Fujimori Y."/>
            <person name="Komiyama M."/>
            <person name="Tashiro H."/>
            <person name="Tanigami A."/>
            <person name="Fujiwara T."/>
            <person name="Ono T."/>
            <person name="Yamada K."/>
            <person name="Fujii Y."/>
            <person name="Ozaki K."/>
            <person name="Hirao M."/>
            <person name="Ohmori Y."/>
            <person name="Kawabata A."/>
            <person name="Hikiji T."/>
            <person name="Kobatake N."/>
            <person name="Inagaki H."/>
            <person name="Ikema Y."/>
            <person name="Okamoto S."/>
            <person name="Okitani R."/>
            <person name="Kawakami T."/>
            <person name="Noguchi S."/>
            <person name="Itoh T."/>
            <person name="Shigeta K."/>
            <person name="Senba T."/>
            <person name="Matsumura K."/>
            <person name="Nakajima Y."/>
            <person name="Mizuno T."/>
            <person name="Morinaga M."/>
            <person name="Sasaki M."/>
            <person name="Togashi T."/>
            <person name="Oyama M."/>
            <person name="Hata H."/>
            <person name="Watanabe M."/>
            <person name="Komatsu T."/>
            <person name="Mizushima-Sugano J."/>
            <person name="Satoh T."/>
            <person name="Shirai Y."/>
            <person name="Takahashi Y."/>
            <person name="Nakagawa K."/>
            <person name="Okumura K."/>
            <person name="Nagase T."/>
            <person name="Nomura N."/>
            <person name="Kikuchi H."/>
            <person name="Masuho Y."/>
            <person name="Yamashita R."/>
            <person name="Nakai K."/>
            <person name="Yada T."/>
            <person name="Nakamura Y."/>
            <person name="Ohara O."/>
            <person name="Isogai T."/>
            <person name="Sugano S."/>
        </authorList>
    </citation>
    <scope>NUCLEOTIDE SEQUENCE [LARGE SCALE MRNA] (ISOFORM 1)</scope>
</reference>
<reference key="4">
    <citation type="journal article" date="2003" name="Nature">
        <title>The DNA sequence and analysis of human chromosome 6.</title>
        <authorList>
            <person name="Mungall A.J."/>
            <person name="Palmer S.A."/>
            <person name="Sims S.K."/>
            <person name="Edwards C.A."/>
            <person name="Ashurst J.L."/>
            <person name="Wilming L."/>
            <person name="Jones M.C."/>
            <person name="Horton R."/>
            <person name="Hunt S.E."/>
            <person name="Scott C.E."/>
            <person name="Gilbert J.G.R."/>
            <person name="Clamp M.E."/>
            <person name="Bethel G."/>
            <person name="Milne S."/>
            <person name="Ainscough R."/>
            <person name="Almeida J.P."/>
            <person name="Ambrose K.D."/>
            <person name="Andrews T.D."/>
            <person name="Ashwell R.I.S."/>
            <person name="Babbage A.K."/>
            <person name="Bagguley C.L."/>
            <person name="Bailey J."/>
            <person name="Banerjee R."/>
            <person name="Barker D.J."/>
            <person name="Barlow K.F."/>
            <person name="Bates K."/>
            <person name="Beare D.M."/>
            <person name="Beasley H."/>
            <person name="Beasley O."/>
            <person name="Bird C.P."/>
            <person name="Blakey S.E."/>
            <person name="Bray-Allen S."/>
            <person name="Brook J."/>
            <person name="Brown A.J."/>
            <person name="Brown J.Y."/>
            <person name="Burford D.C."/>
            <person name="Burrill W."/>
            <person name="Burton J."/>
            <person name="Carder C."/>
            <person name="Carter N.P."/>
            <person name="Chapman J.C."/>
            <person name="Clark S.Y."/>
            <person name="Clark G."/>
            <person name="Clee C.M."/>
            <person name="Clegg S."/>
            <person name="Cobley V."/>
            <person name="Collier R.E."/>
            <person name="Collins J.E."/>
            <person name="Colman L.K."/>
            <person name="Corby N.R."/>
            <person name="Coville G.J."/>
            <person name="Culley K.M."/>
            <person name="Dhami P."/>
            <person name="Davies J."/>
            <person name="Dunn M."/>
            <person name="Earthrowl M.E."/>
            <person name="Ellington A.E."/>
            <person name="Evans K.A."/>
            <person name="Faulkner L."/>
            <person name="Francis M.D."/>
            <person name="Frankish A."/>
            <person name="Frankland J."/>
            <person name="French L."/>
            <person name="Garner P."/>
            <person name="Garnett J."/>
            <person name="Ghori M.J."/>
            <person name="Gilby L.M."/>
            <person name="Gillson C.J."/>
            <person name="Glithero R.J."/>
            <person name="Grafham D.V."/>
            <person name="Grant M."/>
            <person name="Gribble S."/>
            <person name="Griffiths C."/>
            <person name="Griffiths M.N.D."/>
            <person name="Hall R."/>
            <person name="Halls K.S."/>
            <person name="Hammond S."/>
            <person name="Harley J.L."/>
            <person name="Hart E.A."/>
            <person name="Heath P.D."/>
            <person name="Heathcott R."/>
            <person name="Holmes S.J."/>
            <person name="Howden P.J."/>
            <person name="Howe K.L."/>
            <person name="Howell G.R."/>
            <person name="Huckle E."/>
            <person name="Humphray S.J."/>
            <person name="Humphries M.D."/>
            <person name="Hunt A.R."/>
            <person name="Johnson C.M."/>
            <person name="Joy A.A."/>
            <person name="Kay M."/>
            <person name="Keenan S.J."/>
            <person name="Kimberley A.M."/>
            <person name="King A."/>
            <person name="Laird G.K."/>
            <person name="Langford C."/>
            <person name="Lawlor S."/>
            <person name="Leongamornlert D.A."/>
            <person name="Leversha M."/>
            <person name="Lloyd C.R."/>
            <person name="Lloyd D.M."/>
            <person name="Loveland J.E."/>
            <person name="Lovell J."/>
            <person name="Martin S."/>
            <person name="Mashreghi-Mohammadi M."/>
            <person name="Maslen G.L."/>
            <person name="Matthews L."/>
            <person name="McCann O.T."/>
            <person name="McLaren S.J."/>
            <person name="McLay K."/>
            <person name="McMurray A."/>
            <person name="Moore M.J.F."/>
            <person name="Mullikin J.C."/>
            <person name="Niblett D."/>
            <person name="Nickerson T."/>
            <person name="Novik K.L."/>
            <person name="Oliver K."/>
            <person name="Overton-Larty E.K."/>
            <person name="Parker A."/>
            <person name="Patel R."/>
            <person name="Pearce A.V."/>
            <person name="Peck A.I."/>
            <person name="Phillimore B.J.C.T."/>
            <person name="Phillips S."/>
            <person name="Plumb R.W."/>
            <person name="Porter K.M."/>
            <person name="Ramsey Y."/>
            <person name="Ranby S.A."/>
            <person name="Rice C.M."/>
            <person name="Ross M.T."/>
            <person name="Searle S.M."/>
            <person name="Sehra H.K."/>
            <person name="Sheridan E."/>
            <person name="Skuce C.D."/>
            <person name="Smith S."/>
            <person name="Smith M."/>
            <person name="Spraggon L."/>
            <person name="Squares S.L."/>
            <person name="Steward C.A."/>
            <person name="Sycamore N."/>
            <person name="Tamlyn-Hall G."/>
            <person name="Tester J."/>
            <person name="Theaker A.J."/>
            <person name="Thomas D.W."/>
            <person name="Thorpe A."/>
            <person name="Tracey A."/>
            <person name="Tromans A."/>
            <person name="Tubby B."/>
            <person name="Wall M."/>
            <person name="Wallis J.M."/>
            <person name="West A.P."/>
            <person name="White S.S."/>
            <person name="Whitehead S.L."/>
            <person name="Whittaker H."/>
            <person name="Wild A."/>
            <person name="Willey D.J."/>
            <person name="Wilmer T.E."/>
            <person name="Wood J.M."/>
            <person name="Wray P.W."/>
            <person name="Wyatt J.C."/>
            <person name="Young L."/>
            <person name="Younger R.M."/>
            <person name="Bentley D.R."/>
            <person name="Coulson A."/>
            <person name="Durbin R.M."/>
            <person name="Hubbard T."/>
            <person name="Sulston J.E."/>
            <person name="Dunham I."/>
            <person name="Rogers J."/>
            <person name="Beck S."/>
        </authorList>
    </citation>
    <scope>NUCLEOTIDE SEQUENCE [LARGE SCALE GENOMIC DNA]</scope>
</reference>
<reference key="5">
    <citation type="submission" date="2005-09" db="EMBL/GenBank/DDBJ databases">
        <authorList>
            <person name="Mural R.J."/>
            <person name="Istrail S."/>
            <person name="Sutton G.G."/>
            <person name="Florea L."/>
            <person name="Halpern A.L."/>
            <person name="Mobarry C.M."/>
            <person name="Lippert R."/>
            <person name="Walenz B."/>
            <person name="Shatkay H."/>
            <person name="Dew I."/>
            <person name="Miller J.R."/>
            <person name="Flanigan M.J."/>
            <person name="Edwards N.J."/>
            <person name="Bolanos R."/>
            <person name="Fasulo D."/>
            <person name="Halldorsson B.V."/>
            <person name="Hannenhalli S."/>
            <person name="Turner R."/>
            <person name="Yooseph S."/>
            <person name="Lu F."/>
            <person name="Nusskern D.R."/>
            <person name="Shue B.C."/>
            <person name="Zheng X.H."/>
            <person name="Zhong F."/>
            <person name="Delcher A.L."/>
            <person name="Huson D.H."/>
            <person name="Kravitz S.A."/>
            <person name="Mouchard L."/>
            <person name="Reinert K."/>
            <person name="Remington K.A."/>
            <person name="Clark A.G."/>
            <person name="Waterman M.S."/>
            <person name="Eichler E.E."/>
            <person name="Adams M.D."/>
            <person name="Hunkapiller M.W."/>
            <person name="Myers E.W."/>
            <person name="Venter J.C."/>
        </authorList>
    </citation>
    <scope>NUCLEOTIDE SEQUENCE [LARGE SCALE GENOMIC DNA]</scope>
</reference>
<reference key="6">
    <citation type="journal article" date="2004" name="Genome Res.">
        <title>The status, quality, and expansion of the NIH full-length cDNA project: the Mammalian Gene Collection (MGC).</title>
        <authorList>
            <consortium name="The MGC Project Team"/>
        </authorList>
    </citation>
    <scope>NUCLEOTIDE SEQUENCE [LARGE SCALE MRNA] (ISOFORM 1)</scope>
    <source>
        <tissue>Skin</tissue>
    </source>
</reference>
<reference key="7">
    <citation type="journal article" date="2000" name="Mol. Endocrinol.">
        <title>PNRC: a proline-rich nuclear receptor coregulatory protein that modulates transcriptional activation of multiple nuclear receptors including orphan receptors SF1 (steroidogenic factor 1) and ERRalpha1 (estrogen related receptor alpha-1).</title>
        <authorList>
            <person name="Zhou D."/>
            <person name="Quach K.M."/>
            <person name="Yang C."/>
            <person name="Lee S.Y."/>
            <person name="Pohajdak B."/>
            <person name="Chen S."/>
        </authorList>
    </citation>
    <scope>FUNCTION</scope>
    <scope>INTERACTION WITH NUCLEAR RECEPTORS</scope>
    <scope>MUTAGENESIS OF PRO-287 AND PRO-290</scope>
    <scope>NUCLEAR LOCALIZATION SIGNAL</scope>
    <scope>SUBCELLULAR LOCATION</scope>
</reference>
<reference key="8">
    <citation type="journal article" date="2001" name="Nucleic Acids Res.">
        <title>PNRC2 is a 16 kDa coactivator that interacts with nuclear receptors through an SH3-binding motif.</title>
        <authorList>
            <person name="Zhou D."/>
            <person name="Chen S."/>
        </authorList>
    </citation>
    <scope>TISSUE SPECIFICITY</scope>
    <scope>INTERACTION WITH GRB2</scope>
</reference>
<comment type="function">
    <text evidence="2">Nuclear receptor coactivator. May play a role in signal transduction.</text>
</comment>
<comment type="subunit">
    <text evidence="2 3">Interacts with many nuclear receptors including AR, ESR1, ESRRA, ESRRG, NR3C1/GR, NR5A1, PGR, TR, RAR and RXR. Interacts with GRB2.</text>
</comment>
<comment type="interaction">
    <interactant intactId="EBI-2827376">
        <id>Q12796</id>
    </interactant>
    <interactant intactId="EBI-710067">
        <id>Q9H1D9</id>
        <label>POLR3F</label>
    </interactant>
    <organismsDiffer>false</organismsDiffer>
    <experiments>3</experiments>
</comment>
<comment type="subcellular location">
    <subcellularLocation>
        <location evidence="5">Nucleus</location>
    </subcellularLocation>
</comment>
<comment type="alternative products">
    <event type="alternative splicing"/>
    <isoform>
        <id>Q12796-1</id>
        <name>1</name>
        <sequence type="displayed"/>
    </isoform>
    <isoform>
        <id>Q12796-2</id>
        <name>2</name>
        <sequence type="described" ref="VSP_055501"/>
    </isoform>
</comment>
<comment type="tissue specificity">
    <text evidence="3">Expressed in liver, lung, fat and NK/T cells.</text>
</comment>
<comment type="domain">
    <text>The interaction between PNRC1 and nuclear receptors is dependent on the SH3 binding motif.</text>
</comment>
<comment type="similarity">
    <text evidence="5">Belongs to the PNRC family. PNRC1 subfamily.</text>
</comment>
<proteinExistence type="evidence at protein level"/>